<reference key="1">
    <citation type="submission" date="2005-12" db="EMBL/GenBank/DDBJ databases">
        <authorList>
            <consortium name="NIH - Mammalian Gene Collection (MGC) project"/>
        </authorList>
    </citation>
    <scope>NUCLEOTIDE SEQUENCE [LARGE SCALE MRNA]</scope>
    <source>
        <strain>Crossbred X Angus</strain>
        <tissue>Liver</tissue>
    </source>
</reference>
<gene>
    <name type="primary">PMF1</name>
</gene>
<evidence type="ECO:0000250" key="1"/>
<evidence type="ECO:0000255" key="2"/>
<evidence type="ECO:0000256" key="3">
    <source>
        <dbReference type="SAM" id="MobiDB-lite"/>
    </source>
</evidence>
<proteinExistence type="evidence at transcript level"/>
<sequence>MAEASSVNVGSGCAEKGPEELSQEPARPGTNISRVKLFDTMVDTFLQKLVAAGSFQRFTDCYKRFYQLQPEMTQRIYDKFVTQLQTSIQEEISEIKAEGNLEAVLIALDAIVEESKDRKEQAWRPSGIPEKDLRSAMAPYLLQQRDALQRRVQRQEAENRQLADAVLAGRRQLEELQLQAQARQQAWQALHREQKELLAVLKEPE</sequence>
<organism>
    <name type="scientific">Bos taurus</name>
    <name type="common">Bovine</name>
    <dbReference type="NCBI Taxonomy" id="9913"/>
    <lineage>
        <taxon>Eukaryota</taxon>
        <taxon>Metazoa</taxon>
        <taxon>Chordata</taxon>
        <taxon>Craniata</taxon>
        <taxon>Vertebrata</taxon>
        <taxon>Euteleostomi</taxon>
        <taxon>Mammalia</taxon>
        <taxon>Eutheria</taxon>
        <taxon>Laurasiatheria</taxon>
        <taxon>Artiodactyla</taxon>
        <taxon>Ruminantia</taxon>
        <taxon>Pecora</taxon>
        <taxon>Bovidae</taxon>
        <taxon>Bovinae</taxon>
        <taxon>Bos</taxon>
    </lineage>
</organism>
<protein>
    <recommendedName>
        <fullName>Polyamine-modulated factor 1</fullName>
        <shortName>PMF-1</shortName>
    </recommendedName>
</protein>
<comment type="function">
    <text evidence="1">Part of the MIS12 complex which is required for normal chromosome alignment and segregation and kinetochore formation during mitosis. May act as a cotranscription partner of NFE2L2 involved in regulation of polyamine-induced transcription of SSAT (By similarity).</text>
</comment>
<comment type="subunit">
    <text evidence="1">Component of the MIS12 complex composed of MIS12, DSN1, NSL1 and PMF1. Interacts with COPS7A. Interacts via its coiled-coil domain with the leucine-zipper domain of NFE2L2. The interaction with NFE2L2 is required for the transcriptional regulation of SSAT (By similarity).</text>
</comment>
<comment type="subcellular location">
    <subcellularLocation>
        <location evidence="1">Nucleus</location>
    </subcellularLocation>
    <subcellularLocation>
        <location evidence="1">Chromosome</location>
        <location evidence="1">Centromere</location>
        <location evidence="1">Kinetochore</location>
    </subcellularLocation>
    <text evidence="1">Associated with the kinetochore.</text>
</comment>
<keyword id="KW-0010">Activator</keyword>
<keyword id="KW-0131">Cell cycle</keyword>
<keyword id="KW-0132">Cell division</keyword>
<keyword id="KW-0137">Centromere</keyword>
<keyword id="KW-0158">Chromosome</keyword>
<keyword id="KW-0159">Chromosome partition</keyword>
<keyword id="KW-0175">Coiled coil</keyword>
<keyword id="KW-0995">Kinetochore</keyword>
<keyword id="KW-0498">Mitosis</keyword>
<keyword id="KW-0539">Nucleus</keyword>
<keyword id="KW-1185">Reference proteome</keyword>
<keyword id="KW-0804">Transcription</keyword>
<keyword id="KW-0805">Transcription regulation</keyword>
<name>PMF1_BOVIN</name>
<dbReference type="EMBL" id="BC111342">
    <property type="protein sequence ID" value="AAI11343.1"/>
    <property type="molecule type" value="mRNA"/>
</dbReference>
<dbReference type="RefSeq" id="NP_001033301.1">
    <property type="nucleotide sequence ID" value="NM_001038212.2"/>
</dbReference>
<dbReference type="SMR" id="Q2T9N4"/>
<dbReference type="FunCoup" id="Q2T9N4">
    <property type="interactions" value="2579"/>
</dbReference>
<dbReference type="STRING" id="9913.ENSBTAP00000012411"/>
<dbReference type="PaxDb" id="9913-ENSBTAP00000012411"/>
<dbReference type="Ensembl" id="ENSBTAT00000012411.4">
    <property type="protein sequence ID" value="ENSBTAP00000012411.3"/>
    <property type="gene ID" value="ENSBTAG00000009432.5"/>
</dbReference>
<dbReference type="GeneID" id="616311"/>
<dbReference type="KEGG" id="bta:616311"/>
<dbReference type="CTD" id="11243"/>
<dbReference type="VEuPathDB" id="HostDB:ENSBTAG00000009432"/>
<dbReference type="eggNOG" id="ENOG502S3AR">
    <property type="taxonomic scope" value="Eukaryota"/>
</dbReference>
<dbReference type="GeneTree" id="ENSGT00940000164230"/>
<dbReference type="HOGENOM" id="CLU_106985_1_1_1"/>
<dbReference type="InParanoid" id="Q2T9N4"/>
<dbReference type="OMA" id="IHLAHLM"/>
<dbReference type="OrthoDB" id="18453at2759"/>
<dbReference type="TreeFam" id="TF333180"/>
<dbReference type="Reactome" id="R-BTA-141444">
    <property type="pathway name" value="Amplification of signal from unattached kinetochores via a MAD2 inhibitory signal"/>
</dbReference>
<dbReference type="Reactome" id="R-BTA-2467813">
    <property type="pathway name" value="Separation of Sister Chromatids"/>
</dbReference>
<dbReference type="Reactome" id="R-BTA-2500257">
    <property type="pathway name" value="Resolution of Sister Chromatid Cohesion"/>
</dbReference>
<dbReference type="Reactome" id="R-BTA-5663220">
    <property type="pathway name" value="RHO GTPases Activate Formins"/>
</dbReference>
<dbReference type="Reactome" id="R-BTA-68877">
    <property type="pathway name" value="Mitotic Prometaphase"/>
</dbReference>
<dbReference type="Reactome" id="R-BTA-9648025">
    <property type="pathway name" value="EML4 and NUDC in mitotic spindle formation"/>
</dbReference>
<dbReference type="Proteomes" id="UP000009136">
    <property type="component" value="Chromosome 3"/>
</dbReference>
<dbReference type="Bgee" id="ENSBTAG00000009432">
    <property type="expression patterns" value="Expressed in neutrophil and 108 other cell types or tissues"/>
</dbReference>
<dbReference type="GO" id="GO:0000444">
    <property type="term" value="C:MIS12/MIND type complex"/>
    <property type="evidence" value="ECO:0000250"/>
    <property type="project" value="UniProtKB"/>
</dbReference>
<dbReference type="GO" id="GO:0005634">
    <property type="term" value="C:nucleus"/>
    <property type="evidence" value="ECO:0007669"/>
    <property type="project" value="UniProtKB-SubCell"/>
</dbReference>
<dbReference type="GO" id="GO:0051301">
    <property type="term" value="P:cell division"/>
    <property type="evidence" value="ECO:0007669"/>
    <property type="project" value="UniProtKB-KW"/>
</dbReference>
<dbReference type="GO" id="GO:0007059">
    <property type="term" value="P:chromosome segregation"/>
    <property type="evidence" value="ECO:0000318"/>
    <property type="project" value="GO_Central"/>
</dbReference>
<dbReference type="InterPro" id="IPR007128">
    <property type="entry name" value="PMF1/Nnf1"/>
</dbReference>
<dbReference type="PANTHER" id="PTHR15459">
    <property type="entry name" value="POLYAMINE-MODULATED FACTOR 1"/>
    <property type="match status" value="1"/>
</dbReference>
<dbReference type="PANTHER" id="PTHR15459:SF3">
    <property type="entry name" value="POLYAMINE-MODULATED FACTOR 1"/>
    <property type="match status" value="1"/>
</dbReference>
<dbReference type="Pfam" id="PF03980">
    <property type="entry name" value="Nnf1"/>
    <property type="match status" value="1"/>
</dbReference>
<accession>Q2T9N4</accession>
<feature type="chain" id="PRO_0000283824" description="Polyamine-modulated factor 1">
    <location>
        <begin position="1"/>
        <end position="205"/>
    </location>
</feature>
<feature type="region of interest" description="Disordered" evidence="3">
    <location>
        <begin position="1"/>
        <end position="28"/>
    </location>
</feature>
<feature type="coiled-coil region" evidence="2">
    <location>
        <begin position="140"/>
        <end position="190"/>
    </location>
</feature>